<reference key="1">
    <citation type="journal article" date="2004" name="Proc. Natl. Acad. Sci. U.S.A.">
        <title>Genome sequence of Picrophilus torridus and its implications for life around pH 0.</title>
        <authorList>
            <person name="Fuetterer O."/>
            <person name="Angelov A."/>
            <person name="Liesegang H."/>
            <person name="Gottschalk G."/>
            <person name="Schleper C."/>
            <person name="Schepers B."/>
            <person name="Dock C."/>
            <person name="Antranikian G."/>
            <person name="Liebl W."/>
        </authorList>
    </citation>
    <scope>NUCLEOTIDE SEQUENCE [LARGE SCALE GENOMIC DNA]</scope>
    <source>
        <strain>ATCC 700027 / DSM 9790 / JCM 10055 / NBRC 100828 / KAW 2/3</strain>
    </source>
</reference>
<proteinExistence type="inferred from homology"/>
<organism>
    <name type="scientific">Picrophilus torridus (strain ATCC 700027 / DSM 9790 / JCM 10055 / NBRC 100828 / KAW 2/3)</name>
    <dbReference type="NCBI Taxonomy" id="1122961"/>
    <lineage>
        <taxon>Archaea</taxon>
        <taxon>Methanobacteriati</taxon>
        <taxon>Thermoplasmatota</taxon>
        <taxon>Thermoplasmata</taxon>
        <taxon>Thermoplasmatales</taxon>
        <taxon>Picrophilaceae</taxon>
        <taxon>Picrophilus</taxon>
    </lineage>
</organism>
<name>AATE_PICTO</name>
<gene>
    <name evidence="1" type="primary">atpE</name>
    <name type="ordered locus">PTO0493</name>
</gene>
<accession>Q6L1S4</accession>
<comment type="function">
    <text evidence="1">Component of the A-type ATP synthase that produces ATP from ADP in the presence of a proton gradient across the membrane.</text>
</comment>
<comment type="subunit">
    <text evidence="1">Has multiple subunits with at least A(3), B(3), C, D, E, F, H, I and proteolipid K(x).</text>
</comment>
<comment type="subcellular location">
    <subcellularLocation>
        <location evidence="1">Cell membrane</location>
        <topology evidence="1">Peripheral membrane protein</topology>
    </subcellularLocation>
</comment>
<comment type="similarity">
    <text evidence="1">Belongs to the V-ATPase E subunit family.</text>
</comment>
<feature type="chain" id="PRO_0000259353" description="A-type ATP synthase subunit E">
    <location>
        <begin position="1"/>
        <end position="182"/>
    </location>
</feature>
<evidence type="ECO:0000255" key="1">
    <source>
        <dbReference type="HAMAP-Rule" id="MF_00311"/>
    </source>
</evidence>
<protein>
    <recommendedName>
        <fullName evidence="1">A-type ATP synthase subunit E</fullName>
    </recommendedName>
</protein>
<keyword id="KW-0066">ATP synthesis</keyword>
<keyword id="KW-1003">Cell membrane</keyword>
<keyword id="KW-0375">Hydrogen ion transport</keyword>
<keyword id="KW-0406">Ion transport</keyword>
<keyword id="KW-0472">Membrane</keyword>
<keyword id="KW-0813">Transport</keyword>
<sequence>MSLADIIKDIDKSREEQISKINDEYSKRIEELKKSCDSRIQSIKEYYEKKKEADIKTLKKVQEDKIKIDSKSIKMEKRREIVKDALDISYYHLMNITKSKRYDSILNSMVSTAIKTLGEDCEIFASESDAKKINNAKADHKINGGIIAYSKDKKRMLDFRLNSIFENIKDDLASYFYENIEE</sequence>
<dbReference type="EMBL" id="AE017261">
    <property type="protein sequence ID" value="AAT43078.1"/>
    <property type="molecule type" value="Genomic_DNA"/>
</dbReference>
<dbReference type="RefSeq" id="WP_011177294.1">
    <property type="nucleotide sequence ID" value="NC_005877.1"/>
</dbReference>
<dbReference type="SMR" id="Q6L1S4"/>
<dbReference type="STRING" id="263820.PTO0493"/>
<dbReference type="PaxDb" id="263820-PTO0493"/>
<dbReference type="GeneID" id="2844307"/>
<dbReference type="KEGG" id="pto:PTO0493"/>
<dbReference type="eggNOG" id="arCOG00869">
    <property type="taxonomic scope" value="Archaea"/>
</dbReference>
<dbReference type="HOGENOM" id="CLU_1478966_0_0_2"/>
<dbReference type="InParanoid" id="Q6L1S4"/>
<dbReference type="OrthoDB" id="57284at2157"/>
<dbReference type="Proteomes" id="UP000000438">
    <property type="component" value="Chromosome"/>
</dbReference>
<dbReference type="GO" id="GO:0005886">
    <property type="term" value="C:plasma membrane"/>
    <property type="evidence" value="ECO:0007669"/>
    <property type="project" value="UniProtKB-SubCell"/>
</dbReference>
<dbReference type="GO" id="GO:0033178">
    <property type="term" value="C:proton-transporting two-sector ATPase complex, catalytic domain"/>
    <property type="evidence" value="ECO:0007669"/>
    <property type="project" value="InterPro"/>
</dbReference>
<dbReference type="GO" id="GO:0005524">
    <property type="term" value="F:ATP binding"/>
    <property type="evidence" value="ECO:0007669"/>
    <property type="project" value="UniProtKB-UniRule"/>
</dbReference>
<dbReference type="GO" id="GO:0046933">
    <property type="term" value="F:proton-transporting ATP synthase activity, rotational mechanism"/>
    <property type="evidence" value="ECO:0007669"/>
    <property type="project" value="UniProtKB-UniRule"/>
</dbReference>
<dbReference type="GO" id="GO:0046961">
    <property type="term" value="F:proton-transporting ATPase activity, rotational mechanism"/>
    <property type="evidence" value="ECO:0007669"/>
    <property type="project" value="InterPro"/>
</dbReference>
<dbReference type="GO" id="GO:0042777">
    <property type="term" value="P:proton motive force-driven plasma membrane ATP synthesis"/>
    <property type="evidence" value="ECO:0007669"/>
    <property type="project" value="UniProtKB-UniRule"/>
</dbReference>
<dbReference type="Gene3D" id="3.30.2320.30">
    <property type="entry name" value="ATP synthase, E subunit, C-terminal"/>
    <property type="match status" value="1"/>
</dbReference>
<dbReference type="HAMAP" id="MF_00311">
    <property type="entry name" value="ATP_synth_E_arch"/>
    <property type="match status" value="1"/>
</dbReference>
<dbReference type="InterPro" id="IPR038495">
    <property type="entry name" value="ATPase_E_C"/>
</dbReference>
<dbReference type="InterPro" id="IPR002842">
    <property type="entry name" value="ATPase_V1_Esu"/>
</dbReference>
<dbReference type="NCBIfam" id="NF002264">
    <property type="entry name" value="PRK01194.1"/>
    <property type="match status" value="1"/>
</dbReference>
<dbReference type="SUPFAM" id="SSF160527">
    <property type="entry name" value="V-type ATPase subunit E-like"/>
    <property type="match status" value="1"/>
</dbReference>